<accession>P06383</accession>
<comment type="subunit">
    <text evidence="1">Part of the 50S ribosomal subunit.</text>
</comment>
<comment type="subcellular location">
    <subcellularLocation>
        <location>Plastid</location>
        <location>Chloroplast</location>
    </subcellularLocation>
</comment>
<comment type="similarity">
    <text evidence="1">Belongs to the universal ribosomal protein uL16 family.</text>
</comment>
<organism>
    <name type="scientific">Marchantia polymorpha</name>
    <name type="common">Common liverwort</name>
    <name type="synonym">Marchantia aquatica</name>
    <dbReference type="NCBI Taxonomy" id="3197"/>
    <lineage>
        <taxon>Eukaryota</taxon>
        <taxon>Viridiplantae</taxon>
        <taxon>Streptophyta</taxon>
        <taxon>Embryophyta</taxon>
        <taxon>Marchantiophyta</taxon>
        <taxon>Marchantiopsida</taxon>
        <taxon>Marchantiidae</taxon>
        <taxon>Marchantiales</taxon>
        <taxon>Marchantiaceae</taxon>
        <taxon>Marchantia</taxon>
    </lineage>
</organism>
<keyword id="KW-0150">Chloroplast</keyword>
<keyword id="KW-0934">Plastid</keyword>
<keyword id="KW-0687">Ribonucleoprotein</keyword>
<keyword id="KW-0689">Ribosomal protein</keyword>
<gene>
    <name evidence="1" type="primary">rpl16</name>
</gene>
<proteinExistence type="inferred from homology"/>
<feature type="chain" id="PRO_0000062290" description="Large ribosomal subunit protein uL16c">
    <location>
        <begin position="1"/>
        <end position="143"/>
    </location>
</feature>
<reference key="1">
    <citation type="journal article" date="1988" name="J. Mol. Biol.">
        <title>Structure and organization of Marchantia polymorpha chloroplast genome. III. Gene organization of the large single copy region from rbcL to trnI(CAU).</title>
        <authorList>
            <person name="Fukuzawa H."/>
            <person name="Kohchi T."/>
            <person name="Sano T."/>
            <person name="Shirai H."/>
            <person name="Umesono K."/>
            <person name="Inokuchi H."/>
            <person name="Ozeki H."/>
            <person name="Ohyama K."/>
        </authorList>
    </citation>
    <scope>NUCLEOTIDE SEQUENCE [GENOMIC DNA]</scope>
</reference>
<reference key="2">
    <citation type="journal article" date="1986" name="Nature">
        <title>Chloroplast gene organization deduced from complete sequence of liverwort Marchantia polymorpha chloroplast DNA.</title>
        <authorList>
            <person name="Ohyama K."/>
            <person name="Fukuzawa H."/>
            <person name="Kohchi T."/>
            <person name="Shirai H."/>
            <person name="Sano T."/>
            <person name="Sano S."/>
            <person name="Umesono K."/>
            <person name="Shiki Y."/>
            <person name="Takeuchi M."/>
            <person name="Chang Z."/>
            <person name="Aota S."/>
            <person name="Inokuchi H."/>
            <person name="Ozeki H."/>
        </authorList>
    </citation>
    <scope>NUCLEOTIDE SEQUENCE [LARGE SCALE GENOMIC DNA]</scope>
</reference>
<sequence length="143" mass="16150">MLSPKRTKFRKQHCGNLKGISTRGNVICFGKFPLQALEPSWITSRQIEAGRRAITRYARRGGKLWIRIFPDKPITIRPAETRMGSGKGSPEYWVAVVKPGKILYEISGVSENIARAAMKIAAYKMPIRTQFITTSSLNKKQEI</sequence>
<evidence type="ECO:0000255" key="1">
    <source>
        <dbReference type="HAMAP-Rule" id="MF_01342"/>
    </source>
</evidence>
<evidence type="ECO:0000305" key="2"/>
<geneLocation type="chloroplast"/>
<name>RK16_MARPO</name>
<protein>
    <recommendedName>
        <fullName evidence="1">Large ribosomal subunit protein uL16c</fullName>
    </recommendedName>
    <alternativeName>
        <fullName evidence="2">50S ribosomal protein L16, chloroplastic</fullName>
    </alternativeName>
</protein>
<dbReference type="EMBL" id="X04465">
    <property type="protein sequence ID" value="CAA28123.1"/>
    <property type="molecule type" value="Genomic_DNA"/>
</dbReference>
<dbReference type="PIR" id="A02798">
    <property type="entry name" value="R5LV16"/>
</dbReference>
<dbReference type="RefSeq" id="NP_039337.1">
    <property type="nucleotide sequence ID" value="NC_001319.1"/>
</dbReference>
<dbReference type="SMR" id="P06383"/>
<dbReference type="GeneID" id="2702570"/>
<dbReference type="GO" id="GO:0009507">
    <property type="term" value="C:chloroplast"/>
    <property type="evidence" value="ECO:0007669"/>
    <property type="project" value="UniProtKB-SubCell"/>
</dbReference>
<dbReference type="GO" id="GO:1990904">
    <property type="term" value="C:ribonucleoprotein complex"/>
    <property type="evidence" value="ECO:0007669"/>
    <property type="project" value="UniProtKB-KW"/>
</dbReference>
<dbReference type="GO" id="GO:0005840">
    <property type="term" value="C:ribosome"/>
    <property type="evidence" value="ECO:0007669"/>
    <property type="project" value="UniProtKB-KW"/>
</dbReference>
<dbReference type="GO" id="GO:0019843">
    <property type="term" value="F:rRNA binding"/>
    <property type="evidence" value="ECO:0007669"/>
    <property type="project" value="InterPro"/>
</dbReference>
<dbReference type="GO" id="GO:0003735">
    <property type="term" value="F:structural constituent of ribosome"/>
    <property type="evidence" value="ECO:0007669"/>
    <property type="project" value="InterPro"/>
</dbReference>
<dbReference type="GO" id="GO:0006412">
    <property type="term" value="P:translation"/>
    <property type="evidence" value="ECO:0007669"/>
    <property type="project" value="UniProtKB-UniRule"/>
</dbReference>
<dbReference type="CDD" id="cd01433">
    <property type="entry name" value="Ribosomal_L16_L10e"/>
    <property type="match status" value="1"/>
</dbReference>
<dbReference type="FunFam" id="3.90.1170.10:FF:000001">
    <property type="entry name" value="50S ribosomal protein L16"/>
    <property type="match status" value="1"/>
</dbReference>
<dbReference type="Gene3D" id="3.90.1170.10">
    <property type="entry name" value="Ribosomal protein L10e/L16"/>
    <property type="match status" value="1"/>
</dbReference>
<dbReference type="HAMAP" id="MF_01342">
    <property type="entry name" value="Ribosomal_uL16"/>
    <property type="match status" value="1"/>
</dbReference>
<dbReference type="InterPro" id="IPR047873">
    <property type="entry name" value="Ribosomal_uL16"/>
</dbReference>
<dbReference type="InterPro" id="IPR000114">
    <property type="entry name" value="Ribosomal_uL16_bact-type"/>
</dbReference>
<dbReference type="InterPro" id="IPR020798">
    <property type="entry name" value="Ribosomal_uL16_CS"/>
</dbReference>
<dbReference type="InterPro" id="IPR016180">
    <property type="entry name" value="Ribosomal_uL16_dom"/>
</dbReference>
<dbReference type="InterPro" id="IPR036920">
    <property type="entry name" value="Ribosomal_uL16_sf"/>
</dbReference>
<dbReference type="NCBIfam" id="TIGR01164">
    <property type="entry name" value="rplP_bact"/>
    <property type="match status" value="1"/>
</dbReference>
<dbReference type="PANTHER" id="PTHR12220">
    <property type="entry name" value="50S/60S RIBOSOMAL PROTEIN L16"/>
    <property type="match status" value="1"/>
</dbReference>
<dbReference type="PANTHER" id="PTHR12220:SF13">
    <property type="entry name" value="LARGE RIBOSOMAL SUBUNIT PROTEIN UL16M"/>
    <property type="match status" value="1"/>
</dbReference>
<dbReference type="Pfam" id="PF00252">
    <property type="entry name" value="Ribosomal_L16"/>
    <property type="match status" value="1"/>
</dbReference>
<dbReference type="PRINTS" id="PR00060">
    <property type="entry name" value="RIBOSOMALL16"/>
</dbReference>
<dbReference type="SUPFAM" id="SSF54686">
    <property type="entry name" value="Ribosomal protein L16p/L10e"/>
    <property type="match status" value="1"/>
</dbReference>
<dbReference type="PROSITE" id="PS00586">
    <property type="entry name" value="RIBOSOMAL_L16_1"/>
    <property type="match status" value="1"/>
</dbReference>
<dbReference type="PROSITE" id="PS00701">
    <property type="entry name" value="RIBOSOMAL_L16_2"/>
    <property type="match status" value="1"/>
</dbReference>